<organism>
    <name type="scientific">Shewanella amazonensis (strain ATCC BAA-1098 / SB2B)</name>
    <dbReference type="NCBI Taxonomy" id="326297"/>
    <lineage>
        <taxon>Bacteria</taxon>
        <taxon>Pseudomonadati</taxon>
        <taxon>Pseudomonadota</taxon>
        <taxon>Gammaproteobacteria</taxon>
        <taxon>Alteromonadales</taxon>
        <taxon>Shewanellaceae</taxon>
        <taxon>Shewanella</taxon>
    </lineage>
</organism>
<evidence type="ECO:0000255" key="1">
    <source>
        <dbReference type="HAMAP-Rule" id="MF_00333"/>
    </source>
</evidence>
<reference key="1">
    <citation type="submission" date="2006-12" db="EMBL/GenBank/DDBJ databases">
        <title>Complete sequence of Shewanella amazonensis SB2B.</title>
        <authorList>
            <consortium name="US DOE Joint Genome Institute"/>
            <person name="Copeland A."/>
            <person name="Lucas S."/>
            <person name="Lapidus A."/>
            <person name="Barry K."/>
            <person name="Detter J.C."/>
            <person name="Glavina del Rio T."/>
            <person name="Hammon N."/>
            <person name="Israni S."/>
            <person name="Dalin E."/>
            <person name="Tice H."/>
            <person name="Pitluck S."/>
            <person name="Munk A.C."/>
            <person name="Brettin T."/>
            <person name="Bruce D."/>
            <person name="Han C."/>
            <person name="Tapia R."/>
            <person name="Gilna P."/>
            <person name="Schmutz J."/>
            <person name="Larimer F."/>
            <person name="Land M."/>
            <person name="Hauser L."/>
            <person name="Kyrpides N."/>
            <person name="Mikhailova N."/>
            <person name="Fredrickson J."/>
            <person name="Richardson P."/>
        </authorList>
    </citation>
    <scope>NUCLEOTIDE SEQUENCE [LARGE SCALE GENOMIC DNA]</scope>
    <source>
        <strain>ATCC BAA-1098 / SB2B</strain>
    </source>
</reference>
<comment type="function">
    <text evidence="1">Involved in the heme biosynthesis. Catalyzes the aerobic oxidative decarboxylation of propionate groups of rings A and B of coproporphyrinogen-III to yield the vinyl groups in protoporphyrinogen-IX.</text>
</comment>
<comment type="catalytic activity">
    <reaction evidence="1">
        <text>coproporphyrinogen III + O2 + 2 H(+) = protoporphyrinogen IX + 2 CO2 + 2 H2O</text>
        <dbReference type="Rhea" id="RHEA:18257"/>
        <dbReference type="ChEBI" id="CHEBI:15377"/>
        <dbReference type="ChEBI" id="CHEBI:15378"/>
        <dbReference type="ChEBI" id="CHEBI:15379"/>
        <dbReference type="ChEBI" id="CHEBI:16526"/>
        <dbReference type="ChEBI" id="CHEBI:57307"/>
        <dbReference type="ChEBI" id="CHEBI:57309"/>
        <dbReference type="EC" id="1.3.3.3"/>
    </reaction>
</comment>
<comment type="cofactor">
    <cofactor evidence="1">
        <name>a divalent metal cation</name>
        <dbReference type="ChEBI" id="CHEBI:60240"/>
    </cofactor>
</comment>
<comment type="pathway">
    <text evidence="1">Porphyrin-containing compound metabolism; protoporphyrin-IX biosynthesis; protoporphyrinogen-IX from coproporphyrinogen-III (O2 route): step 1/1.</text>
</comment>
<comment type="subunit">
    <text evidence="1">Homodimer.</text>
</comment>
<comment type="subcellular location">
    <subcellularLocation>
        <location evidence="1">Cytoplasm</location>
    </subcellularLocation>
</comment>
<comment type="similarity">
    <text evidence="1">Belongs to the aerobic coproporphyrinogen-III oxidase family.</text>
</comment>
<keyword id="KW-0963">Cytoplasm</keyword>
<keyword id="KW-0350">Heme biosynthesis</keyword>
<keyword id="KW-0479">Metal-binding</keyword>
<keyword id="KW-0560">Oxidoreductase</keyword>
<keyword id="KW-0627">Porphyrin biosynthesis</keyword>
<keyword id="KW-1185">Reference proteome</keyword>
<proteinExistence type="inferred from homology"/>
<dbReference type="EC" id="1.3.3.3" evidence="1"/>
<dbReference type="EMBL" id="CP000507">
    <property type="protein sequence ID" value="ABL98262.1"/>
    <property type="molecule type" value="Genomic_DNA"/>
</dbReference>
<dbReference type="RefSeq" id="WP_011758173.1">
    <property type="nucleotide sequence ID" value="NC_008700.1"/>
</dbReference>
<dbReference type="SMR" id="A1S1K6"/>
<dbReference type="STRING" id="326297.Sama_0050"/>
<dbReference type="KEGG" id="saz:Sama_0050"/>
<dbReference type="eggNOG" id="COG0408">
    <property type="taxonomic scope" value="Bacteria"/>
</dbReference>
<dbReference type="HOGENOM" id="CLU_026169_0_1_6"/>
<dbReference type="OrthoDB" id="9777553at2"/>
<dbReference type="UniPathway" id="UPA00251">
    <property type="reaction ID" value="UER00322"/>
</dbReference>
<dbReference type="Proteomes" id="UP000009175">
    <property type="component" value="Chromosome"/>
</dbReference>
<dbReference type="GO" id="GO:0005737">
    <property type="term" value="C:cytoplasm"/>
    <property type="evidence" value="ECO:0007669"/>
    <property type="project" value="UniProtKB-SubCell"/>
</dbReference>
<dbReference type="GO" id="GO:0004109">
    <property type="term" value="F:coproporphyrinogen oxidase activity"/>
    <property type="evidence" value="ECO:0007669"/>
    <property type="project" value="UniProtKB-UniRule"/>
</dbReference>
<dbReference type="GO" id="GO:0046872">
    <property type="term" value="F:metal ion binding"/>
    <property type="evidence" value="ECO:0007669"/>
    <property type="project" value="UniProtKB-KW"/>
</dbReference>
<dbReference type="GO" id="GO:0042803">
    <property type="term" value="F:protein homodimerization activity"/>
    <property type="evidence" value="ECO:0000250"/>
    <property type="project" value="UniProtKB"/>
</dbReference>
<dbReference type="GO" id="GO:0006782">
    <property type="term" value="P:protoporphyrinogen IX biosynthetic process"/>
    <property type="evidence" value="ECO:0007669"/>
    <property type="project" value="UniProtKB-UniRule"/>
</dbReference>
<dbReference type="FunFam" id="3.40.1500.10:FF:000001">
    <property type="entry name" value="Oxygen-dependent coproporphyrinogen-III oxidase"/>
    <property type="match status" value="1"/>
</dbReference>
<dbReference type="Gene3D" id="3.40.1500.10">
    <property type="entry name" value="Coproporphyrinogen III oxidase, aerobic"/>
    <property type="match status" value="1"/>
</dbReference>
<dbReference type="HAMAP" id="MF_00333">
    <property type="entry name" value="Coprogen_oxidas"/>
    <property type="match status" value="1"/>
</dbReference>
<dbReference type="InterPro" id="IPR001260">
    <property type="entry name" value="Coprogen_oxidase_aer"/>
</dbReference>
<dbReference type="InterPro" id="IPR036406">
    <property type="entry name" value="Coprogen_oxidase_aer_sf"/>
</dbReference>
<dbReference type="InterPro" id="IPR018375">
    <property type="entry name" value="Coprogen_oxidase_CS"/>
</dbReference>
<dbReference type="NCBIfam" id="NF003727">
    <property type="entry name" value="PRK05330.1"/>
    <property type="match status" value="1"/>
</dbReference>
<dbReference type="PANTHER" id="PTHR10755">
    <property type="entry name" value="COPROPORPHYRINOGEN III OXIDASE, MITOCHONDRIAL"/>
    <property type="match status" value="1"/>
</dbReference>
<dbReference type="PANTHER" id="PTHR10755:SF0">
    <property type="entry name" value="OXYGEN-DEPENDENT COPROPORPHYRINOGEN-III OXIDASE, MITOCHONDRIAL"/>
    <property type="match status" value="1"/>
</dbReference>
<dbReference type="Pfam" id="PF01218">
    <property type="entry name" value="Coprogen_oxidas"/>
    <property type="match status" value="1"/>
</dbReference>
<dbReference type="PIRSF" id="PIRSF000166">
    <property type="entry name" value="Coproporphyri_ox"/>
    <property type="match status" value="1"/>
</dbReference>
<dbReference type="PRINTS" id="PR00073">
    <property type="entry name" value="COPRGNOXDASE"/>
</dbReference>
<dbReference type="SUPFAM" id="SSF102886">
    <property type="entry name" value="Coproporphyrinogen III oxidase"/>
    <property type="match status" value="1"/>
</dbReference>
<dbReference type="PROSITE" id="PS01021">
    <property type="entry name" value="COPROGEN_OXIDASE"/>
    <property type="match status" value="1"/>
</dbReference>
<accession>A1S1K6</accession>
<name>HEM6_SHEAM</name>
<gene>
    <name evidence="1" type="primary">hemF</name>
    <name type="ordered locus">Sama_0050</name>
</gene>
<protein>
    <recommendedName>
        <fullName evidence="1">Oxygen-dependent coproporphyrinogen-III oxidase</fullName>
        <shortName evidence="1">CPO</shortName>
        <shortName evidence="1">Coprogen oxidase</shortName>
        <shortName evidence="1">Coproporphyrinogenase</shortName>
        <ecNumber evidence="1">1.3.3.3</ecNumber>
    </recommendedName>
</protein>
<feature type="chain" id="PRO_1000019496" description="Oxygen-dependent coproporphyrinogen-III oxidase">
    <location>
        <begin position="1"/>
        <end position="304"/>
    </location>
</feature>
<feature type="region of interest" description="Important for dimerization" evidence="1">
    <location>
        <begin position="242"/>
        <end position="277"/>
    </location>
</feature>
<feature type="active site" description="Proton donor" evidence="1">
    <location>
        <position position="108"/>
    </location>
</feature>
<feature type="binding site" evidence="1">
    <location>
        <position position="94"/>
    </location>
    <ligand>
        <name>substrate</name>
    </ligand>
</feature>
<feature type="binding site" evidence="1">
    <location>
        <position position="98"/>
    </location>
    <ligand>
        <name>a divalent metal cation</name>
        <dbReference type="ChEBI" id="CHEBI:60240"/>
    </ligand>
</feature>
<feature type="binding site" evidence="1">
    <location>
        <position position="108"/>
    </location>
    <ligand>
        <name>a divalent metal cation</name>
        <dbReference type="ChEBI" id="CHEBI:60240"/>
    </ligand>
</feature>
<feature type="binding site" evidence="1">
    <location>
        <begin position="110"/>
        <end position="112"/>
    </location>
    <ligand>
        <name>substrate</name>
    </ligand>
</feature>
<feature type="binding site" evidence="1">
    <location>
        <position position="147"/>
    </location>
    <ligand>
        <name>a divalent metal cation</name>
        <dbReference type="ChEBI" id="CHEBI:60240"/>
    </ligand>
</feature>
<feature type="binding site" evidence="1">
    <location>
        <position position="177"/>
    </location>
    <ligand>
        <name>a divalent metal cation</name>
        <dbReference type="ChEBI" id="CHEBI:60240"/>
    </ligand>
</feature>
<feature type="binding site" evidence="1">
    <location>
        <begin position="260"/>
        <end position="262"/>
    </location>
    <ligand>
        <name>substrate</name>
    </ligand>
</feature>
<feature type="site" description="Important for dimerization" evidence="1">
    <location>
        <position position="177"/>
    </location>
</feature>
<sequence length="304" mass="34488">MGLPNAEEVKAFLMQLQANICAGLERLDGQASFATDSWQRAEGGGGISRVLTDGAVFEQAGVNFSHVMGASMPASATAHRPELAGRSFEAMGVSLVIHPKNPYIPTTHANVRFFIARKEGADPVWWFGGGFDLTPYYPFESDVKEWHQSAKDLCAPFGNEVYPKYKEWCDKYFFLPHRGETRGVGGLFFDDLNHWEFDKCFDYMQAVGNGFLTAYAPIVERRKDTAYGERERDFQLYRRGRYVEFNLVYDRGTLFGLQTGGRTESILMSMPPLVRWQYAYSPEAGTPEAELYERFLKPQDWLAD</sequence>